<dbReference type="EC" id="2.4.2.18" evidence="1"/>
<dbReference type="EMBL" id="BX548174">
    <property type="protein sequence ID" value="CAE19411.1"/>
    <property type="molecule type" value="Genomic_DNA"/>
</dbReference>
<dbReference type="RefSeq" id="WP_011132585.1">
    <property type="nucleotide sequence ID" value="NC_005072.1"/>
</dbReference>
<dbReference type="SMR" id="Q7TU90"/>
<dbReference type="STRING" id="59919.PMM0952"/>
<dbReference type="KEGG" id="pmm:PMM0952"/>
<dbReference type="eggNOG" id="COG0547">
    <property type="taxonomic scope" value="Bacteria"/>
</dbReference>
<dbReference type="HOGENOM" id="CLU_034315_2_1_3"/>
<dbReference type="OrthoDB" id="9806430at2"/>
<dbReference type="UniPathway" id="UPA00035">
    <property type="reaction ID" value="UER00041"/>
</dbReference>
<dbReference type="Proteomes" id="UP000001026">
    <property type="component" value="Chromosome"/>
</dbReference>
<dbReference type="GO" id="GO:0005829">
    <property type="term" value="C:cytosol"/>
    <property type="evidence" value="ECO:0007669"/>
    <property type="project" value="TreeGrafter"/>
</dbReference>
<dbReference type="GO" id="GO:0004048">
    <property type="term" value="F:anthranilate phosphoribosyltransferase activity"/>
    <property type="evidence" value="ECO:0007669"/>
    <property type="project" value="UniProtKB-UniRule"/>
</dbReference>
<dbReference type="GO" id="GO:0000287">
    <property type="term" value="F:magnesium ion binding"/>
    <property type="evidence" value="ECO:0007669"/>
    <property type="project" value="UniProtKB-UniRule"/>
</dbReference>
<dbReference type="GO" id="GO:0000162">
    <property type="term" value="P:L-tryptophan biosynthetic process"/>
    <property type="evidence" value="ECO:0007669"/>
    <property type="project" value="UniProtKB-UniRule"/>
</dbReference>
<dbReference type="FunFam" id="3.40.1030.10:FF:000002">
    <property type="entry name" value="Anthranilate phosphoribosyltransferase"/>
    <property type="match status" value="1"/>
</dbReference>
<dbReference type="Gene3D" id="3.40.1030.10">
    <property type="entry name" value="Nucleoside phosphorylase/phosphoribosyltransferase catalytic domain"/>
    <property type="match status" value="1"/>
</dbReference>
<dbReference type="Gene3D" id="1.20.970.10">
    <property type="entry name" value="Transferase, Pyrimidine Nucleoside Phosphorylase, Chain C"/>
    <property type="match status" value="1"/>
</dbReference>
<dbReference type="HAMAP" id="MF_00211">
    <property type="entry name" value="TrpD"/>
    <property type="match status" value="1"/>
</dbReference>
<dbReference type="InterPro" id="IPR005940">
    <property type="entry name" value="Anthranilate_Pribosyl_Tfrase"/>
</dbReference>
<dbReference type="InterPro" id="IPR000312">
    <property type="entry name" value="Glycosyl_Trfase_fam3"/>
</dbReference>
<dbReference type="InterPro" id="IPR017459">
    <property type="entry name" value="Glycosyl_Trfase_fam3_N_dom"/>
</dbReference>
<dbReference type="InterPro" id="IPR036320">
    <property type="entry name" value="Glycosyl_Trfase_fam3_N_dom_sf"/>
</dbReference>
<dbReference type="InterPro" id="IPR035902">
    <property type="entry name" value="Nuc_phospho_transferase"/>
</dbReference>
<dbReference type="NCBIfam" id="TIGR01245">
    <property type="entry name" value="trpD"/>
    <property type="match status" value="1"/>
</dbReference>
<dbReference type="PANTHER" id="PTHR43285">
    <property type="entry name" value="ANTHRANILATE PHOSPHORIBOSYLTRANSFERASE"/>
    <property type="match status" value="1"/>
</dbReference>
<dbReference type="PANTHER" id="PTHR43285:SF2">
    <property type="entry name" value="ANTHRANILATE PHOSPHORIBOSYLTRANSFERASE"/>
    <property type="match status" value="1"/>
</dbReference>
<dbReference type="Pfam" id="PF02885">
    <property type="entry name" value="Glycos_trans_3N"/>
    <property type="match status" value="1"/>
</dbReference>
<dbReference type="Pfam" id="PF00591">
    <property type="entry name" value="Glycos_transf_3"/>
    <property type="match status" value="1"/>
</dbReference>
<dbReference type="SUPFAM" id="SSF52418">
    <property type="entry name" value="Nucleoside phosphorylase/phosphoribosyltransferase catalytic domain"/>
    <property type="match status" value="1"/>
</dbReference>
<dbReference type="SUPFAM" id="SSF47648">
    <property type="entry name" value="Nucleoside phosphorylase/phosphoribosyltransferase N-terminal domain"/>
    <property type="match status" value="1"/>
</dbReference>
<keyword id="KW-0028">Amino-acid biosynthesis</keyword>
<keyword id="KW-0057">Aromatic amino acid biosynthesis</keyword>
<keyword id="KW-0328">Glycosyltransferase</keyword>
<keyword id="KW-0460">Magnesium</keyword>
<keyword id="KW-0479">Metal-binding</keyword>
<keyword id="KW-0808">Transferase</keyword>
<keyword id="KW-0822">Tryptophan biosynthesis</keyword>
<gene>
    <name evidence="1" type="primary">trpD</name>
    <name type="ordered locus">PMM0952</name>
</gene>
<feature type="chain" id="PRO_0000227181" description="Anthranilate phosphoribosyltransferase">
    <location>
        <begin position="1"/>
        <end position="343"/>
    </location>
</feature>
<feature type="binding site" evidence="1">
    <location>
        <position position="86"/>
    </location>
    <ligand>
        <name>5-phospho-alpha-D-ribose 1-diphosphate</name>
        <dbReference type="ChEBI" id="CHEBI:58017"/>
    </ligand>
</feature>
<feature type="binding site" evidence="1">
    <location>
        <position position="86"/>
    </location>
    <ligand>
        <name>anthranilate</name>
        <dbReference type="ChEBI" id="CHEBI:16567"/>
        <label>1</label>
    </ligand>
</feature>
<feature type="binding site" evidence="1">
    <location>
        <begin position="89"/>
        <end position="90"/>
    </location>
    <ligand>
        <name>5-phospho-alpha-D-ribose 1-diphosphate</name>
        <dbReference type="ChEBI" id="CHEBI:58017"/>
    </ligand>
</feature>
<feature type="binding site" evidence="1">
    <location>
        <position position="94"/>
    </location>
    <ligand>
        <name>5-phospho-alpha-D-ribose 1-diphosphate</name>
        <dbReference type="ChEBI" id="CHEBI:58017"/>
    </ligand>
</feature>
<feature type="binding site" evidence="1">
    <location>
        <begin position="96"/>
        <end position="99"/>
    </location>
    <ligand>
        <name>5-phospho-alpha-D-ribose 1-diphosphate</name>
        <dbReference type="ChEBI" id="CHEBI:58017"/>
    </ligand>
</feature>
<feature type="binding site" evidence="1">
    <location>
        <position position="98"/>
    </location>
    <ligand>
        <name>Mg(2+)</name>
        <dbReference type="ChEBI" id="CHEBI:18420"/>
        <label>1</label>
    </ligand>
</feature>
<feature type="binding site" evidence="1">
    <location>
        <begin position="114"/>
        <end position="122"/>
    </location>
    <ligand>
        <name>5-phospho-alpha-D-ribose 1-diphosphate</name>
        <dbReference type="ChEBI" id="CHEBI:58017"/>
    </ligand>
</feature>
<feature type="binding site" evidence="1">
    <location>
        <position position="117"/>
    </location>
    <ligand>
        <name>anthranilate</name>
        <dbReference type="ChEBI" id="CHEBI:16567"/>
        <label>1</label>
    </ligand>
</feature>
<feature type="binding site" evidence="1">
    <location>
        <position position="126"/>
    </location>
    <ligand>
        <name>5-phospho-alpha-D-ribose 1-diphosphate</name>
        <dbReference type="ChEBI" id="CHEBI:58017"/>
    </ligand>
</feature>
<feature type="binding site" evidence="1">
    <location>
        <position position="172"/>
    </location>
    <ligand>
        <name>anthranilate</name>
        <dbReference type="ChEBI" id="CHEBI:16567"/>
        <label>2</label>
    </ligand>
</feature>
<feature type="binding site" evidence="1">
    <location>
        <position position="231"/>
    </location>
    <ligand>
        <name>Mg(2+)</name>
        <dbReference type="ChEBI" id="CHEBI:18420"/>
        <label>2</label>
    </ligand>
</feature>
<feature type="binding site" evidence="1">
    <location>
        <position position="232"/>
    </location>
    <ligand>
        <name>Mg(2+)</name>
        <dbReference type="ChEBI" id="CHEBI:18420"/>
        <label>1</label>
    </ligand>
</feature>
<feature type="binding site" evidence="1">
    <location>
        <position position="232"/>
    </location>
    <ligand>
        <name>Mg(2+)</name>
        <dbReference type="ChEBI" id="CHEBI:18420"/>
        <label>2</label>
    </ligand>
</feature>
<name>TRPD_PROMP</name>
<proteinExistence type="inferred from homology"/>
<reference key="1">
    <citation type="journal article" date="2003" name="Nature">
        <title>Genome divergence in two Prochlorococcus ecotypes reflects oceanic niche differentiation.</title>
        <authorList>
            <person name="Rocap G."/>
            <person name="Larimer F.W."/>
            <person name="Lamerdin J.E."/>
            <person name="Malfatti S."/>
            <person name="Chain P."/>
            <person name="Ahlgren N.A."/>
            <person name="Arellano A."/>
            <person name="Coleman M."/>
            <person name="Hauser L."/>
            <person name="Hess W.R."/>
            <person name="Johnson Z.I."/>
            <person name="Land M.L."/>
            <person name="Lindell D."/>
            <person name="Post A.F."/>
            <person name="Regala W."/>
            <person name="Shah M."/>
            <person name="Shaw S.L."/>
            <person name="Steglich C."/>
            <person name="Sullivan M.B."/>
            <person name="Ting C.S."/>
            <person name="Tolonen A."/>
            <person name="Webb E.A."/>
            <person name="Zinser E.R."/>
            <person name="Chisholm S.W."/>
        </authorList>
    </citation>
    <scope>NUCLEOTIDE SEQUENCE [LARGE SCALE GENOMIC DNA]</scope>
    <source>
        <strain>CCMP1986 / NIES-2087 / MED4</strain>
    </source>
</reference>
<comment type="function">
    <text evidence="1">Catalyzes the transfer of the phosphoribosyl group of 5-phosphorylribose-1-pyrophosphate (PRPP) to anthranilate to yield N-(5'-phosphoribosyl)-anthranilate (PRA).</text>
</comment>
<comment type="catalytic activity">
    <reaction evidence="1">
        <text>N-(5-phospho-beta-D-ribosyl)anthranilate + diphosphate = 5-phospho-alpha-D-ribose 1-diphosphate + anthranilate</text>
        <dbReference type="Rhea" id="RHEA:11768"/>
        <dbReference type="ChEBI" id="CHEBI:16567"/>
        <dbReference type="ChEBI" id="CHEBI:18277"/>
        <dbReference type="ChEBI" id="CHEBI:33019"/>
        <dbReference type="ChEBI" id="CHEBI:58017"/>
        <dbReference type="EC" id="2.4.2.18"/>
    </reaction>
</comment>
<comment type="cofactor">
    <cofactor evidence="1">
        <name>Mg(2+)</name>
        <dbReference type="ChEBI" id="CHEBI:18420"/>
    </cofactor>
    <text evidence="1">Binds 2 magnesium ions per monomer.</text>
</comment>
<comment type="pathway">
    <text evidence="1">Amino-acid biosynthesis; L-tryptophan biosynthesis; L-tryptophan from chorismate: step 2/5.</text>
</comment>
<comment type="subunit">
    <text evidence="1">Homodimer.</text>
</comment>
<comment type="similarity">
    <text evidence="1">Belongs to the anthranilate phosphoribosyltransferase family.</text>
</comment>
<sequence length="343" mass="37040">MSIIKTNSEILNQLLYGQDLDAETSNTLMKRWLNDEILEVQTGAFLSALRAKGATGTELSSMADVLLNACKLPVERPNLFMVDTCGTGGDGANTFNISTAVAFVASSCGVNIAKHGNKSASGKVGSADVLLNLGINLNSTLEKVISSIDQIGITFLFAPVWHKSLIKLAPLRKALGIRTVFNQLGPLVNPLRPNAQVLGVASDELLNPMASALSRMEMDRAIVVHGYGGLDEASLEGDNKIIFVDKGELKHSKINVSDFNYQNTSNKDLIVSNDDSYEDILKSVLNGSGQKAHLDVVALNTALVLWVAGIEDDIEKGFKKALFSMSKAEPWNKFLLLKNYLES</sequence>
<protein>
    <recommendedName>
        <fullName evidence="1">Anthranilate phosphoribosyltransferase</fullName>
        <ecNumber evidence="1">2.4.2.18</ecNumber>
    </recommendedName>
</protein>
<organism>
    <name type="scientific">Prochlorococcus marinus subsp. pastoris (strain CCMP1986 / NIES-2087 / MED4)</name>
    <dbReference type="NCBI Taxonomy" id="59919"/>
    <lineage>
        <taxon>Bacteria</taxon>
        <taxon>Bacillati</taxon>
        <taxon>Cyanobacteriota</taxon>
        <taxon>Cyanophyceae</taxon>
        <taxon>Synechococcales</taxon>
        <taxon>Prochlorococcaceae</taxon>
        <taxon>Prochlorococcus</taxon>
    </lineage>
</organism>
<evidence type="ECO:0000255" key="1">
    <source>
        <dbReference type="HAMAP-Rule" id="MF_00211"/>
    </source>
</evidence>
<accession>Q7TU90</accession>